<organism>
    <name type="scientific">Acanthamoeba polyphaga mimivirus</name>
    <name type="common">APMV</name>
    <dbReference type="NCBI Taxonomy" id="212035"/>
    <lineage>
        <taxon>Viruses</taxon>
        <taxon>Varidnaviria</taxon>
        <taxon>Bamfordvirae</taxon>
        <taxon>Nucleocytoviricota</taxon>
        <taxon>Megaviricetes</taxon>
        <taxon>Imitervirales</taxon>
        <taxon>Mimiviridae</taxon>
        <taxon>Megamimivirinae</taxon>
        <taxon>Mimivirus</taxon>
        <taxon>Mimivirus bradfordmassiliense</taxon>
    </lineage>
</organism>
<accession>Q5UQC6</accession>
<comment type="similarity">
    <text evidence="1">Belongs to the mimivirus L223/L227/L812 family.</text>
</comment>
<gene>
    <name type="ordered locus">MIMI_L227</name>
</gene>
<reference key="1">
    <citation type="journal article" date="2004" name="Science">
        <title>The 1.2-megabase genome sequence of Mimivirus.</title>
        <authorList>
            <person name="Raoult D."/>
            <person name="Audic S."/>
            <person name="Robert C."/>
            <person name="Abergel C."/>
            <person name="Renesto P."/>
            <person name="Ogata H."/>
            <person name="La Scola B."/>
            <person name="Susan M."/>
            <person name="Claverie J.-M."/>
        </authorList>
    </citation>
    <scope>NUCLEOTIDE SEQUENCE [LARGE SCALE GENOMIC DNA]</scope>
    <source>
        <strain>Rowbotham-Bradford</strain>
    </source>
</reference>
<name>YL227_MIMIV</name>
<keyword id="KW-1185">Reference proteome</keyword>
<evidence type="ECO:0000305" key="1"/>
<protein>
    <recommendedName>
        <fullName>Uncharacterized protein L227</fullName>
    </recommendedName>
</protein>
<feature type="chain" id="PRO_0000071247" description="Uncharacterized protein L227">
    <location>
        <begin position="1"/>
        <end position="170"/>
    </location>
</feature>
<proteinExistence type="inferred from homology"/>
<dbReference type="EMBL" id="AY653733">
    <property type="protein sequence ID" value="AAV50500.1"/>
    <property type="molecule type" value="Genomic_DNA"/>
</dbReference>
<dbReference type="KEGG" id="vg:9924834"/>
<dbReference type="Proteomes" id="UP000001134">
    <property type="component" value="Genome"/>
</dbReference>
<organismHost>
    <name type="scientific">Acanthamoeba polyphaga</name>
    <name type="common">Amoeba</name>
    <dbReference type="NCBI Taxonomy" id="5757"/>
</organismHost>
<sequence length="170" mass="20012">MEIDIPKSHKIDTEELSPWISYKKFIDDKTIGYYCVRDQVVIAYKKAYIQDKWDHEKSLINSRLTSYYETVIIELEIPKKSIIVKPKDFKTSGYRTNIAIVRDIFRLKNSQSITESRIFPDIVCFSKYNFGYVYEIGQAAIPSERLETDLDNPLGPGIYFWLDEEKAIQY</sequence>